<name>GCH1_STRGC</name>
<protein>
    <recommendedName>
        <fullName evidence="1">GTP cyclohydrolase 1</fullName>
        <ecNumber evidence="1">3.5.4.16</ecNumber>
    </recommendedName>
    <alternativeName>
        <fullName evidence="1">GTP cyclohydrolase I</fullName>
        <shortName evidence="1">GTP-CH-I</shortName>
    </alternativeName>
</protein>
<gene>
    <name evidence="1" type="primary">folE</name>
    <name type="ordered locus">SGO_1882</name>
</gene>
<accession>A8AZD8</accession>
<dbReference type="EC" id="3.5.4.16" evidence="1"/>
<dbReference type="EMBL" id="CP000725">
    <property type="protein sequence ID" value="ABV10978.1"/>
    <property type="molecule type" value="Genomic_DNA"/>
</dbReference>
<dbReference type="RefSeq" id="WP_012130903.1">
    <property type="nucleotide sequence ID" value="NC_009785.1"/>
</dbReference>
<dbReference type="SMR" id="A8AZD8"/>
<dbReference type="STRING" id="467705.SGO_1882"/>
<dbReference type="KEGG" id="sgo:SGO_1882"/>
<dbReference type="eggNOG" id="COG0302">
    <property type="taxonomic scope" value="Bacteria"/>
</dbReference>
<dbReference type="HOGENOM" id="CLU_049768_3_3_9"/>
<dbReference type="UniPathway" id="UPA00848">
    <property type="reaction ID" value="UER00151"/>
</dbReference>
<dbReference type="Proteomes" id="UP000001131">
    <property type="component" value="Chromosome"/>
</dbReference>
<dbReference type="GO" id="GO:0005737">
    <property type="term" value="C:cytoplasm"/>
    <property type="evidence" value="ECO:0007669"/>
    <property type="project" value="TreeGrafter"/>
</dbReference>
<dbReference type="GO" id="GO:0005525">
    <property type="term" value="F:GTP binding"/>
    <property type="evidence" value="ECO:0007669"/>
    <property type="project" value="UniProtKB-KW"/>
</dbReference>
<dbReference type="GO" id="GO:0003934">
    <property type="term" value="F:GTP cyclohydrolase I activity"/>
    <property type="evidence" value="ECO:0007669"/>
    <property type="project" value="UniProtKB-UniRule"/>
</dbReference>
<dbReference type="GO" id="GO:0008270">
    <property type="term" value="F:zinc ion binding"/>
    <property type="evidence" value="ECO:0007669"/>
    <property type="project" value="UniProtKB-UniRule"/>
</dbReference>
<dbReference type="GO" id="GO:0006730">
    <property type="term" value="P:one-carbon metabolic process"/>
    <property type="evidence" value="ECO:0007669"/>
    <property type="project" value="UniProtKB-UniRule"/>
</dbReference>
<dbReference type="GO" id="GO:0006729">
    <property type="term" value="P:tetrahydrobiopterin biosynthetic process"/>
    <property type="evidence" value="ECO:0007669"/>
    <property type="project" value="TreeGrafter"/>
</dbReference>
<dbReference type="GO" id="GO:0046654">
    <property type="term" value="P:tetrahydrofolate biosynthetic process"/>
    <property type="evidence" value="ECO:0007669"/>
    <property type="project" value="UniProtKB-UniRule"/>
</dbReference>
<dbReference type="FunFam" id="1.10.286.10:FF:000001">
    <property type="entry name" value="GTP cyclohydrolase 1"/>
    <property type="match status" value="1"/>
</dbReference>
<dbReference type="FunFam" id="3.30.1130.10:FF:000001">
    <property type="entry name" value="GTP cyclohydrolase 1"/>
    <property type="match status" value="1"/>
</dbReference>
<dbReference type="Gene3D" id="1.10.286.10">
    <property type="match status" value="1"/>
</dbReference>
<dbReference type="Gene3D" id="3.30.1130.10">
    <property type="match status" value="1"/>
</dbReference>
<dbReference type="HAMAP" id="MF_00223">
    <property type="entry name" value="FolE"/>
    <property type="match status" value="1"/>
</dbReference>
<dbReference type="InterPro" id="IPR043133">
    <property type="entry name" value="GTP-CH-I_C/QueF"/>
</dbReference>
<dbReference type="InterPro" id="IPR043134">
    <property type="entry name" value="GTP-CH-I_N"/>
</dbReference>
<dbReference type="InterPro" id="IPR001474">
    <property type="entry name" value="GTP_CycHdrlase_I"/>
</dbReference>
<dbReference type="InterPro" id="IPR018234">
    <property type="entry name" value="GTP_CycHdrlase_I_CS"/>
</dbReference>
<dbReference type="InterPro" id="IPR020602">
    <property type="entry name" value="GTP_CycHdrlase_I_dom"/>
</dbReference>
<dbReference type="NCBIfam" id="TIGR00063">
    <property type="entry name" value="folE"/>
    <property type="match status" value="1"/>
</dbReference>
<dbReference type="NCBIfam" id="NF006825">
    <property type="entry name" value="PRK09347.1-2"/>
    <property type="match status" value="1"/>
</dbReference>
<dbReference type="NCBIfam" id="NF006826">
    <property type="entry name" value="PRK09347.1-3"/>
    <property type="match status" value="1"/>
</dbReference>
<dbReference type="PANTHER" id="PTHR11109:SF7">
    <property type="entry name" value="GTP CYCLOHYDROLASE 1"/>
    <property type="match status" value="1"/>
</dbReference>
<dbReference type="PANTHER" id="PTHR11109">
    <property type="entry name" value="GTP CYCLOHYDROLASE I"/>
    <property type="match status" value="1"/>
</dbReference>
<dbReference type="Pfam" id="PF01227">
    <property type="entry name" value="GTP_cyclohydroI"/>
    <property type="match status" value="1"/>
</dbReference>
<dbReference type="SUPFAM" id="SSF55620">
    <property type="entry name" value="Tetrahydrobiopterin biosynthesis enzymes-like"/>
    <property type="match status" value="1"/>
</dbReference>
<dbReference type="PROSITE" id="PS00859">
    <property type="entry name" value="GTP_CYCLOHYDROL_1_1"/>
    <property type="match status" value="1"/>
</dbReference>
<dbReference type="PROSITE" id="PS00860">
    <property type="entry name" value="GTP_CYCLOHYDROL_1_2"/>
    <property type="match status" value="1"/>
</dbReference>
<reference key="1">
    <citation type="journal article" date="2007" name="J. Bacteriol.">
        <title>Genome-wide transcriptional changes in Streptococcus gordonii in response to competence signaling peptide.</title>
        <authorList>
            <person name="Vickerman M.M."/>
            <person name="Iobst S."/>
            <person name="Jesionowski A.M."/>
            <person name="Gill S.R."/>
        </authorList>
    </citation>
    <scope>NUCLEOTIDE SEQUENCE [LARGE SCALE GENOMIC DNA]</scope>
    <source>
        <strain>Challis / ATCC 35105 / BCRC 15272 / CH1 / DL1 / V288</strain>
    </source>
</reference>
<feature type="chain" id="PRO_1000078151" description="GTP cyclohydrolase 1">
    <location>
        <begin position="1"/>
        <end position="187"/>
    </location>
</feature>
<feature type="binding site" evidence="1">
    <location>
        <position position="76"/>
    </location>
    <ligand>
        <name>Zn(2+)</name>
        <dbReference type="ChEBI" id="CHEBI:29105"/>
    </ligand>
</feature>
<feature type="binding site" evidence="1">
    <location>
        <position position="79"/>
    </location>
    <ligand>
        <name>Zn(2+)</name>
        <dbReference type="ChEBI" id="CHEBI:29105"/>
    </ligand>
</feature>
<feature type="binding site" evidence="1">
    <location>
        <position position="148"/>
    </location>
    <ligand>
        <name>Zn(2+)</name>
        <dbReference type="ChEBI" id="CHEBI:29105"/>
    </ligand>
</feature>
<keyword id="KW-0342">GTP-binding</keyword>
<keyword id="KW-0378">Hydrolase</keyword>
<keyword id="KW-0479">Metal-binding</keyword>
<keyword id="KW-0547">Nucleotide-binding</keyword>
<keyword id="KW-0554">One-carbon metabolism</keyword>
<keyword id="KW-1185">Reference proteome</keyword>
<keyword id="KW-0862">Zinc</keyword>
<evidence type="ECO:0000255" key="1">
    <source>
        <dbReference type="HAMAP-Rule" id="MF_00223"/>
    </source>
</evidence>
<comment type="catalytic activity">
    <reaction evidence="1">
        <text>GTP + H2O = 7,8-dihydroneopterin 3'-triphosphate + formate + H(+)</text>
        <dbReference type="Rhea" id="RHEA:17473"/>
        <dbReference type="ChEBI" id="CHEBI:15377"/>
        <dbReference type="ChEBI" id="CHEBI:15378"/>
        <dbReference type="ChEBI" id="CHEBI:15740"/>
        <dbReference type="ChEBI" id="CHEBI:37565"/>
        <dbReference type="ChEBI" id="CHEBI:58462"/>
        <dbReference type="EC" id="3.5.4.16"/>
    </reaction>
</comment>
<comment type="pathway">
    <text evidence="1">Cofactor biosynthesis; 7,8-dihydroneopterin triphosphate biosynthesis; 7,8-dihydroneopterin triphosphate from GTP: step 1/1.</text>
</comment>
<comment type="subunit">
    <text evidence="1">Homomer.</text>
</comment>
<comment type="similarity">
    <text evidence="1">Belongs to the GTP cyclohydrolase I family.</text>
</comment>
<organism>
    <name type="scientific">Streptococcus gordonii (strain Challis / ATCC 35105 / BCRC 15272 / CH1 / DL1 / V288)</name>
    <dbReference type="NCBI Taxonomy" id="467705"/>
    <lineage>
        <taxon>Bacteria</taxon>
        <taxon>Bacillati</taxon>
        <taxon>Bacillota</taxon>
        <taxon>Bacilli</taxon>
        <taxon>Lactobacillales</taxon>
        <taxon>Streptococcaceae</taxon>
        <taxon>Streptococcus</taxon>
    </lineage>
</organism>
<proteinExistence type="inferred from homology"/>
<sequence length="187" mass="20989">MSDFEKLQETVYQLLELVGENPDREGLLDTPKRVAKMYQEVFSGLGRDPKDEFTAVFSEGHEEVVLVKDIPFHSMCEHHLLPFYGVAHVAYLPSNGKVTGLSKLARAVEVASKRPQLQERLTAQIATALDEALSPEGVFVMVEAEHMCMTMRGIKKPGSKTITTVAKGIYKENVHQRQEILSMIHHD</sequence>